<reference key="1">
    <citation type="submission" date="2008-01" db="EMBL/GenBank/DDBJ databases">
        <title>Complete sequence of Thermoanaerobacter pseudethanolicus 39E.</title>
        <authorList>
            <person name="Copeland A."/>
            <person name="Lucas S."/>
            <person name="Lapidus A."/>
            <person name="Barry K."/>
            <person name="Glavina del Rio T."/>
            <person name="Dalin E."/>
            <person name="Tice H."/>
            <person name="Pitluck S."/>
            <person name="Bruce D."/>
            <person name="Goodwin L."/>
            <person name="Saunders E."/>
            <person name="Brettin T."/>
            <person name="Detter J.C."/>
            <person name="Han C."/>
            <person name="Schmutz J."/>
            <person name="Larimer F."/>
            <person name="Land M."/>
            <person name="Hauser L."/>
            <person name="Kyrpides N."/>
            <person name="Lykidis A."/>
            <person name="Hemme C."/>
            <person name="Fields M.W."/>
            <person name="He Z."/>
            <person name="Zhou J."/>
            <person name="Richardson P."/>
        </authorList>
    </citation>
    <scope>NUCLEOTIDE SEQUENCE [LARGE SCALE GENOMIC DNA]</scope>
    <source>
        <strain>ATCC 33223 / DSM 2355 / 39E</strain>
    </source>
</reference>
<proteinExistence type="inferred from homology"/>
<evidence type="ECO:0000255" key="1">
    <source>
        <dbReference type="HAMAP-Rule" id="MF_00372"/>
    </source>
</evidence>
<gene>
    <name evidence="1" type="primary">hutI</name>
    <name type="ordered locus">Teth39_1835</name>
</gene>
<name>HUTI_THEP3</name>
<accession>B0KCB7</accession>
<sequence>MEADLLIYNIKKIYTPLGNCPQCGSDMENIEEIEDAYIAIKDGKILAAGKSPAAISAKEKIDAKGMIAIPGFVDPHTHLIHYGSRENEVALKLKGYCYVDILKQGGGILSTVNATRNASDDQLIEKAMKSLDIMLSHGTTTVEVKSGYGLSTEEEIRLLRLMNKLNSISLVDIVPTFLGAHSIPTEFKENSWGYVDKIINEMIPKVKEENLAEFCDVFCEDGAFDYEQSKKILEEAKKYGMKLKIHADELTQSGGGELAGILGAVSADHLEEVSEKGIELMKKAGTVGVLLPGVSYFLDRPYANARKLIEKGLAVALGTDYNPGTSPTENLQLIMSFAYIKMKMSAKEILTAVTLNAACAIDRGNEIGTIEKGKKADILLIDVPNLDYVMYHFGINHVNTVIKSKGDKAVVIGVR</sequence>
<protein>
    <recommendedName>
        <fullName evidence="1">Imidazolonepropionase</fullName>
        <ecNumber evidence="1">3.5.2.7</ecNumber>
    </recommendedName>
    <alternativeName>
        <fullName evidence="1">Imidazolone-5-propionate hydrolase</fullName>
    </alternativeName>
</protein>
<organism>
    <name type="scientific">Thermoanaerobacter pseudethanolicus (strain ATCC 33223 / 39E)</name>
    <name type="common">Clostridium thermohydrosulfuricum</name>
    <dbReference type="NCBI Taxonomy" id="340099"/>
    <lineage>
        <taxon>Bacteria</taxon>
        <taxon>Bacillati</taxon>
        <taxon>Bacillota</taxon>
        <taxon>Clostridia</taxon>
        <taxon>Thermoanaerobacterales</taxon>
        <taxon>Thermoanaerobacteraceae</taxon>
        <taxon>Thermoanaerobacter</taxon>
    </lineage>
</organism>
<dbReference type="EC" id="3.5.2.7" evidence="1"/>
<dbReference type="EMBL" id="CP000924">
    <property type="protein sequence ID" value="ABY95471.1"/>
    <property type="molecule type" value="Genomic_DNA"/>
</dbReference>
<dbReference type="RefSeq" id="WP_004402001.1">
    <property type="nucleotide sequence ID" value="NC_010321.1"/>
</dbReference>
<dbReference type="SMR" id="B0KCB7"/>
<dbReference type="STRING" id="340099.Teth39_1835"/>
<dbReference type="KEGG" id="tpd:Teth39_1835"/>
<dbReference type="eggNOG" id="COG1228">
    <property type="taxonomic scope" value="Bacteria"/>
</dbReference>
<dbReference type="HOGENOM" id="CLU_041647_0_1_9"/>
<dbReference type="UniPathway" id="UPA00379">
    <property type="reaction ID" value="UER00551"/>
</dbReference>
<dbReference type="Proteomes" id="UP000002156">
    <property type="component" value="Chromosome"/>
</dbReference>
<dbReference type="GO" id="GO:0005737">
    <property type="term" value="C:cytoplasm"/>
    <property type="evidence" value="ECO:0007669"/>
    <property type="project" value="UniProtKB-SubCell"/>
</dbReference>
<dbReference type="GO" id="GO:0050480">
    <property type="term" value="F:imidazolonepropionase activity"/>
    <property type="evidence" value="ECO:0007669"/>
    <property type="project" value="UniProtKB-UniRule"/>
</dbReference>
<dbReference type="GO" id="GO:0005506">
    <property type="term" value="F:iron ion binding"/>
    <property type="evidence" value="ECO:0007669"/>
    <property type="project" value="UniProtKB-UniRule"/>
</dbReference>
<dbReference type="GO" id="GO:0008270">
    <property type="term" value="F:zinc ion binding"/>
    <property type="evidence" value="ECO:0007669"/>
    <property type="project" value="UniProtKB-UniRule"/>
</dbReference>
<dbReference type="GO" id="GO:0019556">
    <property type="term" value="P:L-histidine catabolic process to glutamate and formamide"/>
    <property type="evidence" value="ECO:0007669"/>
    <property type="project" value="UniProtKB-UniPathway"/>
</dbReference>
<dbReference type="GO" id="GO:0019557">
    <property type="term" value="P:L-histidine catabolic process to glutamate and formate"/>
    <property type="evidence" value="ECO:0007669"/>
    <property type="project" value="UniProtKB-UniPathway"/>
</dbReference>
<dbReference type="CDD" id="cd01296">
    <property type="entry name" value="Imidazolone-5PH"/>
    <property type="match status" value="1"/>
</dbReference>
<dbReference type="FunFam" id="3.20.20.140:FF:000007">
    <property type="entry name" value="Imidazolonepropionase"/>
    <property type="match status" value="1"/>
</dbReference>
<dbReference type="Gene3D" id="3.20.20.140">
    <property type="entry name" value="Metal-dependent hydrolases"/>
    <property type="match status" value="1"/>
</dbReference>
<dbReference type="Gene3D" id="2.30.40.10">
    <property type="entry name" value="Urease, subunit C, domain 1"/>
    <property type="match status" value="1"/>
</dbReference>
<dbReference type="HAMAP" id="MF_00372">
    <property type="entry name" value="HutI"/>
    <property type="match status" value="1"/>
</dbReference>
<dbReference type="InterPro" id="IPR006680">
    <property type="entry name" value="Amidohydro-rel"/>
</dbReference>
<dbReference type="InterPro" id="IPR005920">
    <property type="entry name" value="HutI"/>
</dbReference>
<dbReference type="InterPro" id="IPR011059">
    <property type="entry name" value="Metal-dep_hydrolase_composite"/>
</dbReference>
<dbReference type="InterPro" id="IPR032466">
    <property type="entry name" value="Metal_Hydrolase"/>
</dbReference>
<dbReference type="NCBIfam" id="TIGR01224">
    <property type="entry name" value="hutI"/>
    <property type="match status" value="1"/>
</dbReference>
<dbReference type="PANTHER" id="PTHR42752">
    <property type="entry name" value="IMIDAZOLONEPROPIONASE"/>
    <property type="match status" value="1"/>
</dbReference>
<dbReference type="PANTHER" id="PTHR42752:SF1">
    <property type="entry name" value="IMIDAZOLONEPROPIONASE-RELATED"/>
    <property type="match status" value="1"/>
</dbReference>
<dbReference type="Pfam" id="PF01979">
    <property type="entry name" value="Amidohydro_1"/>
    <property type="match status" value="1"/>
</dbReference>
<dbReference type="SUPFAM" id="SSF51338">
    <property type="entry name" value="Composite domain of metallo-dependent hydrolases"/>
    <property type="match status" value="1"/>
</dbReference>
<dbReference type="SUPFAM" id="SSF51556">
    <property type="entry name" value="Metallo-dependent hydrolases"/>
    <property type="match status" value="1"/>
</dbReference>
<keyword id="KW-0963">Cytoplasm</keyword>
<keyword id="KW-0369">Histidine metabolism</keyword>
<keyword id="KW-0378">Hydrolase</keyword>
<keyword id="KW-0408">Iron</keyword>
<keyword id="KW-0479">Metal-binding</keyword>
<keyword id="KW-1185">Reference proteome</keyword>
<keyword id="KW-0862">Zinc</keyword>
<feature type="chain" id="PRO_1000121561" description="Imidazolonepropionase">
    <location>
        <begin position="1"/>
        <end position="415"/>
    </location>
</feature>
<feature type="binding site" evidence="1">
    <location>
        <position position="76"/>
    </location>
    <ligand>
        <name>Fe(3+)</name>
        <dbReference type="ChEBI" id="CHEBI:29034"/>
    </ligand>
</feature>
<feature type="binding site" evidence="1">
    <location>
        <position position="76"/>
    </location>
    <ligand>
        <name>Zn(2+)</name>
        <dbReference type="ChEBI" id="CHEBI:29105"/>
    </ligand>
</feature>
<feature type="binding site" evidence="1">
    <location>
        <position position="78"/>
    </location>
    <ligand>
        <name>Fe(3+)</name>
        <dbReference type="ChEBI" id="CHEBI:29034"/>
    </ligand>
</feature>
<feature type="binding site" evidence="1">
    <location>
        <position position="78"/>
    </location>
    <ligand>
        <name>Zn(2+)</name>
        <dbReference type="ChEBI" id="CHEBI:29105"/>
    </ligand>
</feature>
<feature type="binding site" evidence="1">
    <location>
        <position position="85"/>
    </location>
    <ligand>
        <name>4-imidazolone-5-propanoate</name>
        <dbReference type="ChEBI" id="CHEBI:77893"/>
    </ligand>
</feature>
<feature type="binding site" evidence="1">
    <location>
        <position position="148"/>
    </location>
    <ligand>
        <name>4-imidazolone-5-propanoate</name>
        <dbReference type="ChEBI" id="CHEBI:77893"/>
    </ligand>
</feature>
<feature type="binding site" evidence="1">
    <location>
        <position position="148"/>
    </location>
    <ligand>
        <name>N-formimidoyl-L-glutamate</name>
        <dbReference type="ChEBI" id="CHEBI:58928"/>
    </ligand>
</feature>
<feature type="binding site" evidence="1">
    <location>
        <position position="181"/>
    </location>
    <ligand>
        <name>4-imidazolone-5-propanoate</name>
        <dbReference type="ChEBI" id="CHEBI:77893"/>
    </ligand>
</feature>
<feature type="binding site" evidence="1">
    <location>
        <position position="246"/>
    </location>
    <ligand>
        <name>Fe(3+)</name>
        <dbReference type="ChEBI" id="CHEBI:29034"/>
    </ligand>
</feature>
<feature type="binding site" evidence="1">
    <location>
        <position position="246"/>
    </location>
    <ligand>
        <name>Zn(2+)</name>
        <dbReference type="ChEBI" id="CHEBI:29105"/>
    </ligand>
</feature>
<feature type="binding site" evidence="1">
    <location>
        <position position="249"/>
    </location>
    <ligand>
        <name>4-imidazolone-5-propanoate</name>
        <dbReference type="ChEBI" id="CHEBI:77893"/>
    </ligand>
</feature>
<feature type="binding site" evidence="1">
    <location>
        <position position="320"/>
    </location>
    <ligand>
        <name>Fe(3+)</name>
        <dbReference type="ChEBI" id="CHEBI:29034"/>
    </ligand>
</feature>
<feature type="binding site" evidence="1">
    <location>
        <position position="320"/>
    </location>
    <ligand>
        <name>Zn(2+)</name>
        <dbReference type="ChEBI" id="CHEBI:29105"/>
    </ligand>
</feature>
<feature type="binding site" evidence="1">
    <location>
        <position position="322"/>
    </location>
    <ligand>
        <name>N-formimidoyl-L-glutamate</name>
        <dbReference type="ChEBI" id="CHEBI:58928"/>
    </ligand>
</feature>
<feature type="binding site" evidence="1">
    <location>
        <position position="324"/>
    </location>
    <ligand>
        <name>N-formimidoyl-L-glutamate</name>
        <dbReference type="ChEBI" id="CHEBI:58928"/>
    </ligand>
</feature>
<feature type="binding site" evidence="1">
    <location>
        <position position="325"/>
    </location>
    <ligand>
        <name>4-imidazolone-5-propanoate</name>
        <dbReference type="ChEBI" id="CHEBI:77893"/>
    </ligand>
</feature>
<comment type="function">
    <text evidence="1">Catalyzes the hydrolytic cleavage of the carbon-nitrogen bond in imidazolone-5-propanoate to yield N-formimidoyl-L-glutamate. It is the third step in the universal histidine degradation pathway.</text>
</comment>
<comment type="catalytic activity">
    <reaction evidence="1">
        <text>4-imidazolone-5-propanoate + H2O = N-formimidoyl-L-glutamate</text>
        <dbReference type="Rhea" id="RHEA:23660"/>
        <dbReference type="ChEBI" id="CHEBI:15377"/>
        <dbReference type="ChEBI" id="CHEBI:58928"/>
        <dbReference type="ChEBI" id="CHEBI:77893"/>
        <dbReference type="EC" id="3.5.2.7"/>
    </reaction>
</comment>
<comment type="cofactor">
    <cofactor evidence="1">
        <name>Zn(2+)</name>
        <dbReference type="ChEBI" id="CHEBI:29105"/>
    </cofactor>
    <cofactor evidence="1">
        <name>Fe(3+)</name>
        <dbReference type="ChEBI" id="CHEBI:29034"/>
    </cofactor>
    <text evidence="1">Binds 1 zinc or iron ion per subunit.</text>
</comment>
<comment type="pathway">
    <text evidence="1">Amino-acid degradation; L-histidine degradation into L-glutamate; N-formimidoyl-L-glutamate from L-histidine: step 3/3.</text>
</comment>
<comment type="subcellular location">
    <subcellularLocation>
        <location evidence="1">Cytoplasm</location>
    </subcellularLocation>
</comment>
<comment type="similarity">
    <text evidence="1">Belongs to the metallo-dependent hydrolases superfamily. HutI family.</text>
</comment>